<keyword id="KW-0067">ATP-binding</keyword>
<keyword id="KW-0997">Cell inner membrane</keyword>
<keyword id="KW-1003">Cell membrane</keyword>
<keyword id="KW-0378">Hydrolase</keyword>
<keyword id="KW-0472">Membrane</keyword>
<keyword id="KW-0479">Metal-binding</keyword>
<keyword id="KW-0482">Metalloprotease</keyword>
<keyword id="KW-0547">Nucleotide-binding</keyword>
<keyword id="KW-0645">Protease</keyword>
<keyword id="KW-1185">Reference proteome</keyword>
<keyword id="KW-0812">Transmembrane</keyword>
<keyword id="KW-1133">Transmembrane helix</keyword>
<keyword id="KW-0862">Zinc</keyword>
<organism>
    <name type="scientific">Acidobacterium capsulatum (strain ATCC 51196 / DSM 11244 / BCRC 80197 / JCM 7670 / NBRC 15755 / NCIMB 13165 / 161)</name>
    <dbReference type="NCBI Taxonomy" id="240015"/>
    <lineage>
        <taxon>Bacteria</taxon>
        <taxon>Pseudomonadati</taxon>
        <taxon>Acidobacteriota</taxon>
        <taxon>Terriglobia</taxon>
        <taxon>Terriglobales</taxon>
        <taxon>Acidobacteriaceae</taxon>
        <taxon>Acidobacterium</taxon>
    </lineage>
</organism>
<gene>
    <name evidence="1" type="primary">ftsH</name>
    <name type="ordered locus">ACP_2036</name>
</gene>
<name>FTSH_ACIC5</name>
<evidence type="ECO:0000255" key="1">
    <source>
        <dbReference type="HAMAP-Rule" id="MF_01458"/>
    </source>
</evidence>
<evidence type="ECO:0000256" key="2">
    <source>
        <dbReference type="SAM" id="MobiDB-lite"/>
    </source>
</evidence>
<feature type="chain" id="PRO_0000400319" description="ATP-dependent zinc metalloprotease FtsH">
    <location>
        <begin position="1"/>
        <end position="639"/>
    </location>
</feature>
<feature type="topological domain" description="Cytoplasmic" evidence="1">
    <location>
        <begin position="1"/>
        <end position="4"/>
    </location>
</feature>
<feature type="transmembrane region" description="Helical" evidence="1">
    <location>
        <begin position="5"/>
        <end position="25"/>
    </location>
</feature>
<feature type="topological domain" description="Periplasmic" evidence="1">
    <location>
        <begin position="26"/>
        <end position="104"/>
    </location>
</feature>
<feature type="transmembrane region" description="Helical" evidence="1">
    <location>
        <begin position="105"/>
        <end position="125"/>
    </location>
</feature>
<feature type="topological domain" description="Cytoplasmic" evidence="1">
    <location>
        <begin position="126"/>
        <end position="639"/>
    </location>
</feature>
<feature type="region of interest" description="Disordered" evidence="2">
    <location>
        <begin position="597"/>
        <end position="639"/>
    </location>
</feature>
<feature type="active site" evidence="1">
    <location>
        <position position="419"/>
    </location>
</feature>
<feature type="binding site" evidence="1">
    <location>
        <begin position="196"/>
        <end position="203"/>
    </location>
    <ligand>
        <name>ATP</name>
        <dbReference type="ChEBI" id="CHEBI:30616"/>
    </ligand>
</feature>
<feature type="binding site" evidence="1">
    <location>
        <position position="418"/>
    </location>
    <ligand>
        <name>Zn(2+)</name>
        <dbReference type="ChEBI" id="CHEBI:29105"/>
        <note>catalytic</note>
    </ligand>
</feature>
<feature type="binding site" evidence="1">
    <location>
        <position position="422"/>
    </location>
    <ligand>
        <name>Zn(2+)</name>
        <dbReference type="ChEBI" id="CHEBI:29105"/>
        <note>catalytic</note>
    </ligand>
</feature>
<feature type="binding site" evidence="1">
    <location>
        <position position="494"/>
    </location>
    <ligand>
        <name>Zn(2+)</name>
        <dbReference type="ChEBI" id="CHEBI:29105"/>
        <note>catalytic</note>
    </ligand>
</feature>
<comment type="function">
    <text evidence="1">Acts as a processive, ATP-dependent zinc metallopeptidase for both cytoplasmic and membrane proteins. Plays a role in the quality control of integral membrane proteins.</text>
</comment>
<comment type="cofactor">
    <cofactor evidence="1">
        <name>Zn(2+)</name>
        <dbReference type="ChEBI" id="CHEBI:29105"/>
    </cofactor>
    <text evidence="1">Binds 1 zinc ion per subunit.</text>
</comment>
<comment type="subunit">
    <text evidence="1">Homohexamer.</text>
</comment>
<comment type="subcellular location">
    <subcellularLocation>
        <location evidence="1">Cell inner membrane</location>
        <topology evidence="1">Multi-pass membrane protein</topology>
        <orientation evidence="1">Cytoplasmic side</orientation>
    </subcellularLocation>
</comment>
<comment type="similarity">
    <text evidence="1">In the central section; belongs to the AAA ATPase family.</text>
</comment>
<comment type="similarity">
    <text evidence="1">In the C-terminal section; belongs to the peptidase M41 family.</text>
</comment>
<protein>
    <recommendedName>
        <fullName evidence="1">ATP-dependent zinc metalloprotease FtsH</fullName>
        <ecNumber evidence="1">3.4.24.-</ecNumber>
    </recommendedName>
</protein>
<accession>C1F8X6</accession>
<dbReference type="EC" id="3.4.24.-" evidence="1"/>
<dbReference type="EMBL" id="CP001472">
    <property type="protein sequence ID" value="ACO33862.1"/>
    <property type="molecule type" value="Genomic_DNA"/>
</dbReference>
<dbReference type="RefSeq" id="WP_015897140.1">
    <property type="nucleotide sequence ID" value="NC_012483.1"/>
</dbReference>
<dbReference type="SMR" id="C1F8X6"/>
<dbReference type="FunCoup" id="C1F8X6">
    <property type="interactions" value="489"/>
</dbReference>
<dbReference type="STRING" id="240015.ACP_2036"/>
<dbReference type="MEROPS" id="M41.001"/>
<dbReference type="KEGG" id="aca:ACP_2036"/>
<dbReference type="eggNOG" id="COG0465">
    <property type="taxonomic scope" value="Bacteria"/>
</dbReference>
<dbReference type="HOGENOM" id="CLU_000688_16_0_0"/>
<dbReference type="InParanoid" id="C1F8X6"/>
<dbReference type="OrthoDB" id="9809379at2"/>
<dbReference type="Proteomes" id="UP000002207">
    <property type="component" value="Chromosome"/>
</dbReference>
<dbReference type="GO" id="GO:0005886">
    <property type="term" value="C:plasma membrane"/>
    <property type="evidence" value="ECO:0007669"/>
    <property type="project" value="UniProtKB-SubCell"/>
</dbReference>
<dbReference type="GO" id="GO:0005524">
    <property type="term" value="F:ATP binding"/>
    <property type="evidence" value="ECO:0007669"/>
    <property type="project" value="UniProtKB-UniRule"/>
</dbReference>
<dbReference type="GO" id="GO:0016887">
    <property type="term" value="F:ATP hydrolysis activity"/>
    <property type="evidence" value="ECO:0007669"/>
    <property type="project" value="UniProtKB-UniRule"/>
</dbReference>
<dbReference type="GO" id="GO:0004176">
    <property type="term" value="F:ATP-dependent peptidase activity"/>
    <property type="evidence" value="ECO:0007669"/>
    <property type="project" value="InterPro"/>
</dbReference>
<dbReference type="GO" id="GO:0004222">
    <property type="term" value="F:metalloendopeptidase activity"/>
    <property type="evidence" value="ECO:0007669"/>
    <property type="project" value="InterPro"/>
</dbReference>
<dbReference type="GO" id="GO:0008270">
    <property type="term" value="F:zinc ion binding"/>
    <property type="evidence" value="ECO:0007669"/>
    <property type="project" value="UniProtKB-UniRule"/>
</dbReference>
<dbReference type="GO" id="GO:0030163">
    <property type="term" value="P:protein catabolic process"/>
    <property type="evidence" value="ECO:0007669"/>
    <property type="project" value="UniProtKB-UniRule"/>
</dbReference>
<dbReference type="GO" id="GO:0006508">
    <property type="term" value="P:proteolysis"/>
    <property type="evidence" value="ECO:0007669"/>
    <property type="project" value="UniProtKB-KW"/>
</dbReference>
<dbReference type="CDD" id="cd19501">
    <property type="entry name" value="RecA-like_FtsH"/>
    <property type="match status" value="1"/>
</dbReference>
<dbReference type="FunFam" id="1.10.8.60:FF:000001">
    <property type="entry name" value="ATP-dependent zinc metalloprotease FtsH"/>
    <property type="match status" value="1"/>
</dbReference>
<dbReference type="FunFam" id="1.20.58.760:FF:000001">
    <property type="entry name" value="ATP-dependent zinc metalloprotease FtsH"/>
    <property type="match status" value="1"/>
</dbReference>
<dbReference type="FunFam" id="3.40.50.300:FF:000001">
    <property type="entry name" value="ATP-dependent zinc metalloprotease FtsH"/>
    <property type="match status" value="1"/>
</dbReference>
<dbReference type="Gene3D" id="1.10.8.60">
    <property type="match status" value="1"/>
</dbReference>
<dbReference type="Gene3D" id="3.30.720.210">
    <property type="match status" value="1"/>
</dbReference>
<dbReference type="Gene3D" id="3.40.50.300">
    <property type="entry name" value="P-loop containing nucleotide triphosphate hydrolases"/>
    <property type="match status" value="1"/>
</dbReference>
<dbReference type="Gene3D" id="1.20.58.760">
    <property type="entry name" value="Peptidase M41"/>
    <property type="match status" value="1"/>
</dbReference>
<dbReference type="HAMAP" id="MF_01458">
    <property type="entry name" value="FtsH"/>
    <property type="match status" value="1"/>
</dbReference>
<dbReference type="InterPro" id="IPR003593">
    <property type="entry name" value="AAA+_ATPase"/>
</dbReference>
<dbReference type="InterPro" id="IPR041569">
    <property type="entry name" value="AAA_lid_3"/>
</dbReference>
<dbReference type="InterPro" id="IPR003959">
    <property type="entry name" value="ATPase_AAA_core"/>
</dbReference>
<dbReference type="InterPro" id="IPR003960">
    <property type="entry name" value="ATPase_AAA_CS"/>
</dbReference>
<dbReference type="InterPro" id="IPR005936">
    <property type="entry name" value="FtsH"/>
</dbReference>
<dbReference type="InterPro" id="IPR027417">
    <property type="entry name" value="P-loop_NTPase"/>
</dbReference>
<dbReference type="InterPro" id="IPR011546">
    <property type="entry name" value="Pept_M41_FtsH_extracell"/>
</dbReference>
<dbReference type="InterPro" id="IPR000642">
    <property type="entry name" value="Peptidase_M41"/>
</dbReference>
<dbReference type="InterPro" id="IPR037219">
    <property type="entry name" value="Peptidase_M41-like"/>
</dbReference>
<dbReference type="NCBIfam" id="TIGR01241">
    <property type="entry name" value="FtsH_fam"/>
    <property type="match status" value="1"/>
</dbReference>
<dbReference type="PANTHER" id="PTHR23076:SF97">
    <property type="entry name" value="ATP-DEPENDENT ZINC METALLOPROTEASE YME1L1"/>
    <property type="match status" value="1"/>
</dbReference>
<dbReference type="PANTHER" id="PTHR23076">
    <property type="entry name" value="METALLOPROTEASE M41 FTSH"/>
    <property type="match status" value="1"/>
</dbReference>
<dbReference type="Pfam" id="PF00004">
    <property type="entry name" value="AAA"/>
    <property type="match status" value="1"/>
</dbReference>
<dbReference type="Pfam" id="PF17862">
    <property type="entry name" value="AAA_lid_3"/>
    <property type="match status" value="1"/>
</dbReference>
<dbReference type="Pfam" id="PF06480">
    <property type="entry name" value="FtsH_ext"/>
    <property type="match status" value="1"/>
</dbReference>
<dbReference type="Pfam" id="PF01434">
    <property type="entry name" value="Peptidase_M41"/>
    <property type="match status" value="1"/>
</dbReference>
<dbReference type="SMART" id="SM00382">
    <property type="entry name" value="AAA"/>
    <property type="match status" value="1"/>
</dbReference>
<dbReference type="SUPFAM" id="SSF140990">
    <property type="entry name" value="FtsH protease domain-like"/>
    <property type="match status" value="1"/>
</dbReference>
<dbReference type="SUPFAM" id="SSF52540">
    <property type="entry name" value="P-loop containing nucleoside triphosphate hydrolases"/>
    <property type="match status" value="1"/>
</dbReference>
<dbReference type="PROSITE" id="PS00674">
    <property type="entry name" value="AAA"/>
    <property type="match status" value="1"/>
</dbReference>
<sequence>MNSTVKTIVFWVFILACCILLWQVFQRSSNTGKEQEISFSQFLNDAQQGQIHDVTVVGGEVHGHFRSANAAFHVEVPTNYPQLYDILNKNHVAVTVKDNSGSPWWSILIQFSPVLVLVALWFFMIRQMQSGGNKALSFGKSRARLLSMQQKKVTFKDVAGVDEAKEELKEIIEFLREAQKFQKLGGRIPKGVLLVGPPGTGKTLLARAVAGEANVPFFSISGSDFVEMFVGVGASRVRDLFEQGKKNAPCIIFIDEIDAVGRHRGAGLGGGHDEREQTLNQLLVEMDGFEANDGVILVAATNRPDVLDPALLRPGRFDRRVVVGRPDVRGREEVLRVHAKKVPLAEDVDLRVLARGTPGFSGADLANMVNEGALSAARANRKVVTMQDFESAKDKVLMGAERKSMLLTDEEKRVTAYHESGHAIVAAMRKHADPLHKVTIIPRGMALGVTMQLPEEDKHTVTKDYLETQLAILMGGRIAEEIFLHQMTTGAGNDIERATEMARKMVCEYGMSRLGPLTYGKKEEQIFLGREIAQHRDFSEETARQIDAEVRSLVDEAYRASYQLLNDNQPIMHKMAAALLERETIDANDIRMIIEGKDLPPLKPSGGSGTATTDDVQQVLKPSSDRGAGGLPEGSPSPA</sequence>
<reference key="1">
    <citation type="journal article" date="2009" name="Appl. Environ. Microbiol.">
        <title>Three genomes from the phylum Acidobacteria provide insight into the lifestyles of these microorganisms in soils.</title>
        <authorList>
            <person name="Ward N.L."/>
            <person name="Challacombe J.F."/>
            <person name="Janssen P.H."/>
            <person name="Henrissat B."/>
            <person name="Coutinho P.M."/>
            <person name="Wu M."/>
            <person name="Xie G."/>
            <person name="Haft D.H."/>
            <person name="Sait M."/>
            <person name="Badger J."/>
            <person name="Barabote R.D."/>
            <person name="Bradley B."/>
            <person name="Brettin T.S."/>
            <person name="Brinkac L.M."/>
            <person name="Bruce D."/>
            <person name="Creasy T."/>
            <person name="Daugherty S.C."/>
            <person name="Davidsen T.M."/>
            <person name="DeBoy R.T."/>
            <person name="Detter J.C."/>
            <person name="Dodson R.J."/>
            <person name="Durkin A.S."/>
            <person name="Ganapathy A."/>
            <person name="Gwinn-Giglio M."/>
            <person name="Han C.S."/>
            <person name="Khouri H."/>
            <person name="Kiss H."/>
            <person name="Kothari S.P."/>
            <person name="Madupu R."/>
            <person name="Nelson K.E."/>
            <person name="Nelson W.C."/>
            <person name="Paulsen I."/>
            <person name="Penn K."/>
            <person name="Ren Q."/>
            <person name="Rosovitz M.J."/>
            <person name="Selengut J.D."/>
            <person name="Shrivastava S."/>
            <person name="Sullivan S.A."/>
            <person name="Tapia R."/>
            <person name="Thompson L.S."/>
            <person name="Watkins K.L."/>
            <person name="Yang Q."/>
            <person name="Yu C."/>
            <person name="Zafar N."/>
            <person name="Zhou L."/>
            <person name="Kuske C.R."/>
        </authorList>
    </citation>
    <scope>NUCLEOTIDE SEQUENCE [LARGE SCALE GENOMIC DNA]</scope>
    <source>
        <strain>ATCC 51196 / DSM 11244 / BCRC 80197 / JCM 7670 / NBRC 15755 / NCIMB 13165 / 161</strain>
    </source>
</reference>
<proteinExistence type="inferred from homology"/>